<name>VAPC3_MYCTO</name>
<protein>
    <recommendedName>
        <fullName evidence="1">Ribonuclease VapC3</fullName>
        <shortName evidence="1">RNase VapC3</shortName>
        <ecNumber evidence="1">3.1.-.-</ecNumber>
    </recommendedName>
    <alternativeName>
        <fullName evidence="1">Toxin VapC3</fullName>
    </alternativeName>
</protein>
<gene>
    <name evidence="1" type="primary">vapC3</name>
    <name type="ordered locus">MT0574</name>
</gene>
<comment type="function">
    <text evidence="1">Toxic component of a type II toxin-antitoxin (TA) system. An RNase. Its toxic effect is neutralized by coexpression with cognate antitoxin VapB3 (By similarity).</text>
</comment>
<comment type="cofactor">
    <cofactor evidence="1">
        <name>Mg(2+)</name>
        <dbReference type="ChEBI" id="CHEBI:18420"/>
    </cofactor>
</comment>
<comment type="similarity">
    <text evidence="1">Belongs to the PINc/VapC protein family.</text>
</comment>
<reference key="1">
    <citation type="journal article" date="2002" name="J. Bacteriol.">
        <title>Whole-genome comparison of Mycobacterium tuberculosis clinical and laboratory strains.</title>
        <authorList>
            <person name="Fleischmann R.D."/>
            <person name="Alland D."/>
            <person name="Eisen J.A."/>
            <person name="Carpenter L."/>
            <person name="White O."/>
            <person name="Peterson J.D."/>
            <person name="DeBoy R.T."/>
            <person name="Dodson R.J."/>
            <person name="Gwinn M.L."/>
            <person name="Haft D.H."/>
            <person name="Hickey E.K."/>
            <person name="Kolonay J.F."/>
            <person name="Nelson W.C."/>
            <person name="Umayam L.A."/>
            <person name="Ermolaeva M.D."/>
            <person name="Salzberg S.L."/>
            <person name="Delcher A."/>
            <person name="Utterback T.R."/>
            <person name="Weidman J.F."/>
            <person name="Khouri H.M."/>
            <person name="Gill J."/>
            <person name="Mikula A."/>
            <person name="Bishai W."/>
            <person name="Jacobs W.R. Jr."/>
            <person name="Venter J.C."/>
            <person name="Fraser C.M."/>
        </authorList>
    </citation>
    <scope>NUCLEOTIDE SEQUENCE [LARGE SCALE GENOMIC DNA]</scope>
    <source>
        <strain>CDC 1551 / Oshkosh</strain>
    </source>
</reference>
<sequence length="137" mass="14700">MRASPTSPPEQVVVDASAMVDLLARTSDRCSAVRARLARTAMHAPAHFDAEVLSALGRMQRAGALTVAYVDAALEELRQVPVTRHGLSSLLAGAWSRRDTLRLTDALYVELAETAGLVLLTTDERLARAWPSAHAIG</sequence>
<accession>P9WFB6</accession>
<accession>L0T708</accession>
<accession>O06415</accession>
<accession>Q7D9N6</accession>
<evidence type="ECO:0000255" key="1">
    <source>
        <dbReference type="HAMAP-Rule" id="MF_00265"/>
    </source>
</evidence>
<feature type="chain" id="PRO_0000428567" description="Ribonuclease VapC3">
    <location>
        <begin position="1"/>
        <end position="137"/>
    </location>
</feature>
<feature type="domain" description="PINc" evidence="1">
    <location>
        <begin position="12"/>
        <end position="129"/>
    </location>
</feature>
<feature type="binding site" evidence="1">
    <location>
        <position position="15"/>
    </location>
    <ligand>
        <name>Mg(2+)</name>
        <dbReference type="ChEBI" id="CHEBI:18420"/>
    </ligand>
</feature>
<feature type="binding site" evidence="1">
    <location>
        <position position="105"/>
    </location>
    <ligand>
        <name>Mg(2+)</name>
        <dbReference type="ChEBI" id="CHEBI:18420"/>
    </ligand>
</feature>
<keyword id="KW-0378">Hydrolase</keyword>
<keyword id="KW-0460">Magnesium</keyword>
<keyword id="KW-0479">Metal-binding</keyword>
<keyword id="KW-0540">Nuclease</keyword>
<keyword id="KW-1185">Reference proteome</keyword>
<keyword id="KW-1277">Toxin-antitoxin system</keyword>
<organism>
    <name type="scientific">Mycobacterium tuberculosis (strain CDC 1551 / Oshkosh)</name>
    <dbReference type="NCBI Taxonomy" id="83331"/>
    <lineage>
        <taxon>Bacteria</taxon>
        <taxon>Bacillati</taxon>
        <taxon>Actinomycetota</taxon>
        <taxon>Actinomycetes</taxon>
        <taxon>Mycobacteriales</taxon>
        <taxon>Mycobacteriaceae</taxon>
        <taxon>Mycobacterium</taxon>
        <taxon>Mycobacterium tuberculosis complex</taxon>
    </lineage>
</organism>
<dbReference type="EC" id="3.1.-.-" evidence="1"/>
<dbReference type="EMBL" id="AE000516">
    <property type="protein sequence ID" value="AAK44797.1"/>
    <property type="molecule type" value="Genomic_DNA"/>
</dbReference>
<dbReference type="PIR" id="H70547">
    <property type="entry name" value="H70547"/>
</dbReference>
<dbReference type="RefSeq" id="WP_003898500.1">
    <property type="nucleotide sequence ID" value="NZ_KK341227.1"/>
</dbReference>
<dbReference type="SMR" id="P9WFB6"/>
<dbReference type="KEGG" id="mtc:MT0574"/>
<dbReference type="PATRIC" id="fig|83331.31.peg.605"/>
<dbReference type="HOGENOM" id="CLU_121774_0_1_11"/>
<dbReference type="Proteomes" id="UP000001020">
    <property type="component" value="Chromosome"/>
</dbReference>
<dbReference type="GO" id="GO:0000287">
    <property type="term" value="F:magnesium ion binding"/>
    <property type="evidence" value="ECO:0007669"/>
    <property type="project" value="UniProtKB-UniRule"/>
</dbReference>
<dbReference type="GO" id="GO:0004540">
    <property type="term" value="F:RNA nuclease activity"/>
    <property type="evidence" value="ECO:0007669"/>
    <property type="project" value="InterPro"/>
</dbReference>
<dbReference type="CDD" id="cd09873">
    <property type="entry name" value="PIN_Pae0151-like"/>
    <property type="match status" value="1"/>
</dbReference>
<dbReference type="Gene3D" id="3.40.50.1010">
    <property type="entry name" value="5'-nuclease"/>
    <property type="match status" value="1"/>
</dbReference>
<dbReference type="HAMAP" id="MF_00265">
    <property type="entry name" value="VapC_Nob1"/>
    <property type="match status" value="1"/>
</dbReference>
<dbReference type="InterPro" id="IPR029060">
    <property type="entry name" value="PIN-like_dom_sf"/>
</dbReference>
<dbReference type="InterPro" id="IPR002716">
    <property type="entry name" value="PIN_dom"/>
</dbReference>
<dbReference type="InterPro" id="IPR044153">
    <property type="entry name" value="PIN_Pae0151-like"/>
</dbReference>
<dbReference type="InterPro" id="IPR051619">
    <property type="entry name" value="TypeII_TA_RNase_PINc/VapC"/>
</dbReference>
<dbReference type="InterPro" id="IPR022907">
    <property type="entry name" value="VapC_family"/>
</dbReference>
<dbReference type="PANTHER" id="PTHR35901:SF1">
    <property type="entry name" value="EXONUCLEASE VAPC9"/>
    <property type="match status" value="1"/>
</dbReference>
<dbReference type="PANTHER" id="PTHR35901">
    <property type="entry name" value="RIBONUCLEASE VAPC3"/>
    <property type="match status" value="1"/>
</dbReference>
<dbReference type="Pfam" id="PF01850">
    <property type="entry name" value="PIN"/>
    <property type="match status" value="1"/>
</dbReference>
<dbReference type="SUPFAM" id="SSF88723">
    <property type="entry name" value="PIN domain-like"/>
    <property type="match status" value="1"/>
</dbReference>
<proteinExistence type="inferred from homology"/>